<feature type="chain" id="PRO_0000118676" description="NADH-quinone oxidoreductase subunit C">
    <location>
        <begin position="1"/>
        <end position="199"/>
    </location>
</feature>
<name>NUOC_RHOCA</name>
<evidence type="ECO:0000255" key="1">
    <source>
        <dbReference type="HAMAP-Rule" id="MF_01357"/>
    </source>
</evidence>
<proteinExistence type="inferred from homology"/>
<organism>
    <name type="scientific">Rhodobacter capsulatus</name>
    <name type="common">Rhodopseudomonas capsulata</name>
    <dbReference type="NCBI Taxonomy" id="1061"/>
    <lineage>
        <taxon>Bacteria</taxon>
        <taxon>Pseudomonadati</taxon>
        <taxon>Pseudomonadota</taxon>
        <taxon>Alphaproteobacteria</taxon>
        <taxon>Rhodobacterales</taxon>
        <taxon>Rhodobacter group</taxon>
        <taxon>Rhodobacter</taxon>
    </lineage>
</organism>
<accession>O84971</accession>
<keyword id="KW-0997">Cell inner membrane</keyword>
<keyword id="KW-1003">Cell membrane</keyword>
<keyword id="KW-0472">Membrane</keyword>
<keyword id="KW-0520">NAD</keyword>
<keyword id="KW-0874">Quinone</keyword>
<keyword id="KW-1278">Translocase</keyword>
<keyword id="KW-0813">Transport</keyword>
<keyword id="KW-0830">Ubiquinone</keyword>
<reference key="1">
    <citation type="submission" date="1997-10" db="EMBL/GenBank/DDBJ databases">
        <authorList>
            <person name="Dupuis A."/>
            <person name="Issartel J.P."/>
        </authorList>
    </citation>
    <scope>NUCLEOTIDE SEQUENCE [GENOMIC DNA]</scope>
    <source>
        <strain>ATCC 33303 / B10</strain>
    </source>
</reference>
<gene>
    <name evidence="1" type="primary">nuoC</name>
</gene>
<dbReference type="EC" id="7.1.1.-" evidence="1"/>
<dbReference type="EMBL" id="AF029365">
    <property type="protein sequence ID" value="AAC24987.1"/>
    <property type="molecule type" value="Genomic_DNA"/>
</dbReference>
<dbReference type="RefSeq" id="WP_013067243.1">
    <property type="nucleotide sequence ID" value="NZ_JAOTPJ010000037.1"/>
</dbReference>
<dbReference type="SMR" id="O84971"/>
<dbReference type="OMA" id="VFPAANW"/>
<dbReference type="GO" id="GO:0005886">
    <property type="term" value="C:plasma membrane"/>
    <property type="evidence" value="ECO:0007669"/>
    <property type="project" value="UniProtKB-SubCell"/>
</dbReference>
<dbReference type="GO" id="GO:0008137">
    <property type="term" value="F:NADH dehydrogenase (ubiquinone) activity"/>
    <property type="evidence" value="ECO:0007669"/>
    <property type="project" value="InterPro"/>
</dbReference>
<dbReference type="GO" id="GO:0050136">
    <property type="term" value="F:NADH:ubiquinone reductase (non-electrogenic) activity"/>
    <property type="evidence" value="ECO:0007669"/>
    <property type="project" value="UniProtKB-UniRule"/>
</dbReference>
<dbReference type="GO" id="GO:0048038">
    <property type="term" value="F:quinone binding"/>
    <property type="evidence" value="ECO:0007669"/>
    <property type="project" value="UniProtKB-KW"/>
</dbReference>
<dbReference type="Gene3D" id="3.30.460.80">
    <property type="entry name" value="NADH:ubiquinone oxidoreductase, 30kDa subunit"/>
    <property type="match status" value="1"/>
</dbReference>
<dbReference type="HAMAP" id="MF_01357">
    <property type="entry name" value="NDH1_NuoC"/>
    <property type="match status" value="1"/>
</dbReference>
<dbReference type="InterPro" id="IPR010218">
    <property type="entry name" value="NADH_DH_suC"/>
</dbReference>
<dbReference type="InterPro" id="IPR037232">
    <property type="entry name" value="NADH_quin_OxRdtase_su_C/D-like"/>
</dbReference>
<dbReference type="InterPro" id="IPR001268">
    <property type="entry name" value="NADH_UbQ_OxRdtase_30kDa_su"/>
</dbReference>
<dbReference type="InterPro" id="IPR020396">
    <property type="entry name" value="NADH_UbQ_OxRdtase_CS"/>
</dbReference>
<dbReference type="NCBIfam" id="TIGR01961">
    <property type="entry name" value="NuoC_fam"/>
    <property type="match status" value="1"/>
</dbReference>
<dbReference type="NCBIfam" id="NF004733">
    <property type="entry name" value="PRK06074.1-5"/>
    <property type="match status" value="1"/>
</dbReference>
<dbReference type="PANTHER" id="PTHR10884:SF14">
    <property type="entry name" value="NADH DEHYDROGENASE [UBIQUINONE] IRON-SULFUR PROTEIN 3, MITOCHONDRIAL"/>
    <property type="match status" value="1"/>
</dbReference>
<dbReference type="PANTHER" id="PTHR10884">
    <property type="entry name" value="NADH DEHYDROGENASE UBIQUINONE IRON-SULFUR PROTEIN 3"/>
    <property type="match status" value="1"/>
</dbReference>
<dbReference type="Pfam" id="PF00329">
    <property type="entry name" value="Complex1_30kDa"/>
    <property type="match status" value="1"/>
</dbReference>
<dbReference type="SUPFAM" id="SSF143243">
    <property type="entry name" value="Nqo5-like"/>
    <property type="match status" value="1"/>
</dbReference>
<dbReference type="PROSITE" id="PS00542">
    <property type="entry name" value="COMPLEX1_30K"/>
    <property type="match status" value="1"/>
</dbReference>
<protein>
    <recommendedName>
        <fullName evidence="1">NADH-quinone oxidoreductase subunit C</fullName>
        <ecNumber evidence="1">7.1.1.-</ecNumber>
    </recommendedName>
    <alternativeName>
        <fullName evidence="1">NADH dehydrogenase I subunit C</fullName>
    </alternativeName>
    <alternativeName>
        <fullName evidence="1">NDH-1 subunit C</fullName>
    </alternativeName>
</protein>
<comment type="function">
    <text evidence="1">NDH-1 shuttles electrons from NADH, via FMN and iron-sulfur (Fe-S) centers, to quinones in the respiratory chain. The immediate electron acceptor for the enzyme in this species is believed to be ubiquinone. Couples the redox reaction to proton translocation (for every two electrons transferred, four hydrogen ions are translocated across the cytoplasmic membrane), and thus conserves the redox energy in a proton gradient.</text>
</comment>
<comment type="catalytic activity">
    <reaction evidence="1">
        <text>a quinone + NADH + 5 H(+)(in) = a quinol + NAD(+) + 4 H(+)(out)</text>
        <dbReference type="Rhea" id="RHEA:57888"/>
        <dbReference type="ChEBI" id="CHEBI:15378"/>
        <dbReference type="ChEBI" id="CHEBI:24646"/>
        <dbReference type="ChEBI" id="CHEBI:57540"/>
        <dbReference type="ChEBI" id="CHEBI:57945"/>
        <dbReference type="ChEBI" id="CHEBI:132124"/>
    </reaction>
</comment>
<comment type="subunit">
    <text evidence="1">NDH-1 is composed of 14 different subunits. Subunits NuoB, C, D, E, F, and G constitute the peripheral sector of the complex.</text>
</comment>
<comment type="subcellular location">
    <subcellularLocation>
        <location evidence="1">Cell inner membrane</location>
        <topology evidence="1">Peripheral membrane protein</topology>
        <orientation evidence="1">Cytoplasmic side</orientation>
    </subcellularLocation>
</comment>
<comment type="similarity">
    <text evidence="1">Belongs to the complex I 30 kDa subunit family.</text>
</comment>
<sequence>MSEKLQDLAAHVAQQRPGDVISAEVVQGELTVTVKPEGIADFVRFLRDDAGCRFTTLVDLTAVDWPERVERFEMVWHFLSMWKNQRIRVKAGLAEDAMCPSIVEVYPAANWYEREVFDMFGILFSGHPDLRRLLTDYGFRGHPLRKDFPTTGYIELRYDEVQKRVVYEPVKLAQEYRQFDFLSPWEGAQSVLPGDEKRS</sequence>